<gene>
    <name evidence="1" type="primary">aroB</name>
    <name type="ordered locus">Patl_0665</name>
</gene>
<protein>
    <recommendedName>
        <fullName evidence="1">3-dehydroquinate synthase</fullName>
        <shortName evidence="1">DHQS</shortName>
        <ecNumber evidence="1">4.2.3.4</ecNumber>
    </recommendedName>
</protein>
<sequence>MTTLTVKLGERSYPIFIQPSLLTQGNQLADYIKTDKAVLVTNDLVDPLYSQTVIDSLPSIKIEKIVIADGEQHKNLASFEHVITQLLSMSAARDTTLIALGGGVIGDLTGFVAASFQRGMPFIQIPTTLLSQVDSSVGGKTAVNHPLGKNMIGAFYQPKAVFIDTKTLQTLPAKEFSAGMAEVIKYGIIYDKAFFAWLEQNIAQLIAQDVDALQYSIARCCEIKAEIVAIDERESGLRALLNLGHTFGHAIEAEQGYGNWLHGEAVAAGMVLAAKAGQMKGWMSKEEVQRVIALIEAFSLPIAPPANMGYQTFMQHMAHDKKVQAGKLNFIVPKAIGDAVVTSELDETLLRSLLD</sequence>
<comment type="function">
    <text evidence="1">Catalyzes the conversion of 3-deoxy-D-arabino-heptulosonate 7-phosphate (DAHP) to dehydroquinate (DHQ).</text>
</comment>
<comment type="catalytic activity">
    <reaction evidence="1">
        <text>7-phospho-2-dehydro-3-deoxy-D-arabino-heptonate = 3-dehydroquinate + phosphate</text>
        <dbReference type="Rhea" id="RHEA:21968"/>
        <dbReference type="ChEBI" id="CHEBI:32364"/>
        <dbReference type="ChEBI" id="CHEBI:43474"/>
        <dbReference type="ChEBI" id="CHEBI:58394"/>
        <dbReference type="EC" id="4.2.3.4"/>
    </reaction>
</comment>
<comment type="cofactor">
    <cofactor evidence="1">
        <name>Co(2+)</name>
        <dbReference type="ChEBI" id="CHEBI:48828"/>
    </cofactor>
    <cofactor evidence="1">
        <name>Zn(2+)</name>
        <dbReference type="ChEBI" id="CHEBI:29105"/>
    </cofactor>
    <text evidence="1">Binds 1 divalent metal cation per subunit. Can use either Co(2+) or Zn(2+).</text>
</comment>
<comment type="cofactor">
    <cofactor evidence="1">
        <name>NAD(+)</name>
        <dbReference type="ChEBI" id="CHEBI:57540"/>
    </cofactor>
</comment>
<comment type="pathway">
    <text evidence="1">Metabolic intermediate biosynthesis; chorismate biosynthesis; chorismate from D-erythrose 4-phosphate and phosphoenolpyruvate: step 2/7.</text>
</comment>
<comment type="subcellular location">
    <subcellularLocation>
        <location evidence="1">Cytoplasm</location>
    </subcellularLocation>
</comment>
<comment type="similarity">
    <text evidence="1">Belongs to the sugar phosphate cyclases superfamily. Dehydroquinate synthase family.</text>
</comment>
<dbReference type="EC" id="4.2.3.4" evidence="1"/>
<dbReference type="EMBL" id="CP000388">
    <property type="protein sequence ID" value="ABG39194.1"/>
    <property type="molecule type" value="Genomic_DNA"/>
</dbReference>
<dbReference type="RefSeq" id="WP_011573556.1">
    <property type="nucleotide sequence ID" value="NC_008228.1"/>
</dbReference>
<dbReference type="SMR" id="Q15Y44"/>
<dbReference type="STRING" id="342610.Patl_0665"/>
<dbReference type="KEGG" id="pat:Patl_0665"/>
<dbReference type="eggNOG" id="COG0337">
    <property type="taxonomic scope" value="Bacteria"/>
</dbReference>
<dbReference type="HOGENOM" id="CLU_001201_0_2_6"/>
<dbReference type="OrthoDB" id="9806583at2"/>
<dbReference type="UniPathway" id="UPA00053">
    <property type="reaction ID" value="UER00085"/>
</dbReference>
<dbReference type="Proteomes" id="UP000001981">
    <property type="component" value="Chromosome"/>
</dbReference>
<dbReference type="GO" id="GO:0005737">
    <property type="term" value="C:cytoplasm"/>
    <property type="evidence" value="ECO:0007669"/>
    <property type="project" value="UniProtKB-SubCell"/>
</dbReference>
<dbReference type="GO" id="GO:0003856">
    <property type="term" value="F:3-dehydroquinate synthase activity"/>
    <property type="evidence" value="ECO:0007669"/>
    <property type="project" value="UniProtKB-UniRule"/>
</dbReference>
<dbReference type="GO" id="GO:0046872">
    <property type="term" value="F:metal ion binding"/>
    <property type="evidence" value="ECO:0007669"/>
    <property type="project" value="UniProtKB-KW"/>
</dbReference>
<dbReference type="GO" id="GO:0000166">
    <property type="term" value="F:nucleotide binding"/>
    <property type="evidence" value="ECO:0007669"/>
    <property type="project" value="UniProtKB-KW"/>
</dbReference>
<dbReference type="GO" id="GO:0008652">
    <property type="term" value="P:amino acid biosynthetic process"/>
    <property type="evidence" value="ECO:0007669"/>
    <property type="project" value="UniProtKB-KW"/>
</dbReference>
<dbReference type="GO" id="GO:0009073">
    <property type="term" value="P:aromatic amino acid family biosynthetic process"/>
    <property type="evidence" value="ECO:0007669"/>
    <property type="project" value="UniProtKB-KW"/>
</dbReference>
<dbReference type="GO" id="GO:0009423">
    <property type="term" value="P:chorismate biosynthetic process"/>
    <property type="evidence" value="ECO:0007669"/>
    <property type="project" value="UniProtKB-UniRule"/>
</dbReference>
<dbReference type="CDD" id="cd08195">
    <property type="entry name" value="DHQS"/>
    <property type="match status" value="1"/>
</dbReference>
<dbReference type="FunFam" id="1.20.1090.10:FF:000002">
    <property type="entry name" value="3-dehydroquinate synthase"/>
    <property type="match status" value="1"/>
</dbReference>
<dbReference type="FunFam" id="3.40.50.1970:FF:000001">
    <property type="entry name" value="3-dehydroquinate synthase"/>
    <property type="match status" value="1"/>
</dbReference>
<dbReference type="Gene3D" id="3.40.50.1970">
    <property type="match status" value="1"/>
</dbReference>
<dbReference type="Gene3D" id="1.20.1090.10">
    <property type="entry name" value="Dehydroquinate synthase-like - alpha domain"/>
    <property type="match status" value="1"/>
</dbReference>
<dbReference type="HAMAP" id="MF_00110">
    <property type="entry name" value="DHQ_synthase"/>
    <property type="match status" value="1"/>
</dbReference>
<dbReference type="InterPro" id="IPR050071">
    <property type="entry name" value="Dehydroquinate_synthase"/>
</dbReference>
<dbReference type="InterPro" id="IPR016037">
    <property type="entry name" value="DHQ_synth_AroB"/>
</dbReference>
<dbReference type="InterPro" id="IPR030963">
    <property type="entry name" value="DHQ_synth_fam"/>
</dbReference>
<dbReference type="InterPro" id="IPR030960">
    <property type="entry name" value="DHQS/DOIS_N"/>
</dbReference>
<dbReference type="InterPro" id="IPR056179">
    <property type="entry name" value="DHQS_C"/>
</dbReference>
<dbReference type="NCBIfam" id="TIGR01357">
    <property type="entry name" value="aroB"/>
    <property type="match status" value="1"/>
</dbReference>
<dbReference type="PANTHER" id="PTHR43622">
    <property type="entry name" value="3-DEHYDROQUINATE SYNTHASE"/>
    <property type="match status" value="1"/>
</dbReference>
<dbReference type="PANTHER" id="PTHR43622:SF7">
    <property type="entry name" value="3-DEHYDROQUINATE SYNTHASE, CHLOROPLASTIC"/>
    <property type="match status" value="1"/>
</dbReference>
<dbReference type="Pfam" id="PF01761">
    <property type="entry name" value="DHQ_synthase"/>
    <property type="match status" value="1"/>
</dbReference>
<dbReference type="Pfam" id="PF24621">
    <property type="entry name" value="DHQS_C"/>
    <property type="match status" value="1"/>
</dbReference>
<dbReference type="PIRSF" id="PIRSF001455">
    <property type="entry name" value="DHQ_synth"/>
    <property type="match status" value="1"/>
</dbReference>
<dbReference type="SUPFAM" id="SSF56796">
    <property type="entry name" value="Dehydroquinate synthase-like"/>
    <property type="match status" value="1"/>
</dbReference>
<evidence type="ECO:0000255" key="1">
    <source>
        <dbReference type="HAMAP-Rule" id="MF_00110"/>
    </source>
</evidence>
<proteinExistence type="inferred from homology"/>
<feature type="chain" id="PRO_1000094568" description="3-dehydroquinate synthase">
    <location>
        <begin position="1"/>
        <end position="355"/>
    </location>
</feature>
<feature type="binding site" evidence="1">
    <location>
        <begin position="69"/>
        <end position="74"/>
    </location>
    <ligand>
        <name>NAD(+)</name>
        <dbReference type="ChEBI" id="CHEBI:57540"/>
    </ligand>
</feature>
<feature type="binding site" evidence="1">
    <location>
        <begin position="103"/>
        <end position="107"/>
    </location>
    <ligand>
        <name>NAD(+)</name>
        <dbReference type="ChEBI" id="CHEBI:57540"/>
    </ligand>
</feature>
<feature type="binding site" evidence="1">
    <location>
        <begin position="127"/>
        <end position="128"/>
    </location>
    <ligand>
        <name>NAD(+)</name>
        <dbReference type="ChEBI" id="CHEBI:57540"/>
    </ligand>
</feature>
<feature type="binding site" evidence="1">
    <location>
        <position position="140"/>
    </location>
    <ligand>
        <name>NAD(+)</name>
        <dbReference type="ChEBI" id="CHEBI:57540"/>
    </ligand>
</feature>
<feature type="binding site" evidence="1">
    <location>
        <position position="149"/>
    </location>
    <ligand>
        <name>NAD(+)</name>
        <dbReference type="ChEBI" id="CHEBI:57540"/>
    </ligand>
</feature>
<feature type="binding site" evidence="1">
    <location>
        <begin position="167"/>
        <end position="170"/>
    </location>
    <ligand>
        <name>NAD(+)</name>
        <dbReference type="ChEBI" id="CHEBI:57540"/>
    </ligand>
</feature>
<feature type="binding site" evidence="1">
    <location>
        <position position="182"/>
    </location>
    <ligand>
        <name>Zn(2+)</name>
        <dbReference type="ChEBI" id="CHEBI:29105"/>
    </ligand>
</feature>
<feature type="binding site" evidence="1">
    <location>
        <position position="245"/>
    </location>
    <ligand>
        <name>Zn(2+)</name>
        <dbReference type="ChEBI" id="CHEBI:29105"/>
    </ligand>
</feature>
<feature type="binding site" evidence="1">
    <location>
        <position position="262"/>
    </location>
    <ligand>
        <name>Zn(2+)</name>
        <dbReference type="ChEBI" id="CHEBI:29105"/>
    </ligand>
</feature>
<name>AROB_PSEA6</name>
<accession>Q15Y44</accession>
<keyword id="KW-0028">Amino-acid biosynthesis</keyword>
<keyword id="KW-0057">Aromatic amino acid biosynthesis</keyword>
<keyword id="KW-0170">Cobalt</keyword>
<keyword id="KW-0963">Cytoplasm</keyword>
<keyword id="KW-0456">Lyase</keyword>
<keyword id="KW-0479">Metal-binding</keyword>
<keyword id="KW-0520">NAD</keyword>
<keyword id="KW-0547">Nucleotide-binding</keyword>
<keyword id="KW-0862">Zinc</keyword>
<reference key="1">
    <citation type="submission" date="2006-06" db="EMBL/GenBank/DDBJ databases">
        <title>Complete sequence of Pseudoalteromonas atlantica T6c.</title>
        <authorList>
            <consortium name="US DOE Joint Genome Institute"/>
            <person name="Copeland A."/>
            <person name="Lucas S."/>
            <person name="Lapidus A."/>
            <person name="Barry K."/>
            <person name="Detter J.C."/>
            <person name="Glavina del Rio T."/>
            <person name="Hammon N."/>
            <person name="Israni S."/>
            <person name="Dalin E."/>
            <person name="Tice H."/>
            <person name="Pitluck S."/>
            <person name="Saunders E."/>
            <person name="Brettin T."/>
            <person name="Bruce D."/>
            <person name="Han C."/>
            <person name="Tapia R."/>
            <person name="Gilna P."/>
            <person name="Schmutz J."/>
            <person name="Larimer F."/>
            <person name="Land M."/>
            <person name="Hauser L."/>
            <person name="Kyrpides N."/>
            <person name="Kim E."/>
            <person name="Karls A.C."/>
            <person name="Bartlett D."/>
            <person name="Higgins B.P."/>
            <person name="Richardson P."/>
        </authorList>
    </citation>
    <scope>NUCLEOTIDE SEQUENCE [LARGE SCALE GENOMIC DNA]</scope>
    <source>
        <strain>T6c / ATCC BAA-1087</strain>
    </source>
</reference>
<organism>
    <name type="scientific">Pseudoalteromonas atlantica (strain T6c / ATCC BAA-1087)</name>
    <dbReference type="NCBI Taxonomy" id="3042615"/>
    <lineage>
        <taxon>Bacteria</taxon>
        <taxon>Pseudomonadati</taxon>
        <taxon>Pseudomonadota</taxon>
        <taxon>Gammaproteobacteria</taxon>
        <taxon>Alteromonadales</taxon>
        <taxon>Alteromonadaceae</taxon>
        <taxon>Paraglaciecola</taxon>
    </lineage>
</organism>